<accession>A5CPE3</accession>
<name>MQO_CLAM3</name>
<proteinExistence type="inferred from homology"/>
<dbReference type="EC" id="1.1.5.4" evidence="1"/>
<dbReference type="EMBL" id="AM711867">
    <property type="protein sequence ID" value="CAN00941.1"/>
    <property type="molecule type" value="Genomic_DNA"/>
</dbReference>
<dbReference type="RefSeq" id="WP_012037589.1">
    <property type="nucleotide sequence ID" value="NC_009480.1"/>
</dbReference>
<dbReference type="SMR" id="A5CPE3"/>
<dbReference type="GeneID" id="92946865"/>
<dbReference type="KEGG" id="cmi:CMM_0904"/>
<dbReference type="eggNOG" id="COG0579">
    <property type="taxonomic scope" value="Bacteria"/>
</dbReference>
<dbReference type="HOGENOM" id="CLU_028151_0_0_11"/>
<dbReference type="OrthoDB" id="9763983at2"/>
<dbReference type="UniPathway" id="UPA00223">
    <property type="reaction ID" value="UER01008"/>
</dbReference>
<dbReference type="Proteomes" id="UP000001564">
    <property type="component" value="Chromosome"/>
</dbReference>
<dbReference type="GO" id="GO:0047545">
    <property type="term" value="F:2-hydroxyglutarate dehydrogenase activity"/>
    <property type="evidence" value="ECO:0007669"/>
    <property type="project" value="TreeGrafter"/>
</dbReference>
<dbReference type="GO" id="GO:0008924">
    <property type="term" value="F:L-malate dehydrogenase (quinone) activity"/>
    <property type="evidence" value="ECO:0007669"/>
    <property type="project" value="UniProtKB-UniRule"/>
</dbReference>
<dbReference type="GO" id="GO:0006099">
    <property type="term" value="P:tricarboxylic acid cycle"/>
    <property type="evidence" value="ECO:0007669"/>
    <property type="project" value="UniProtKB-UniRule"/>
</dbReference>
<dbReference type="Gene3D" id="3.30.9.10">
    <property type="entry name" value="D-Amino Acid Oxidase, subunit A, domain 2"/>
    <property type="match status" value="1"/>
</dbReference>
<dbReference type="Gene3D" id="3.50.50.60">
    <property type="entry name" value="FAD/NAD(P)-binding domain"/>
    <property type="match status" value="1"/>
</dbReference>
<dbReference type="HAMAP" id="MF_00212">
    <property type="entry name" value="MQO"/>
    <property type="match status" value="1"/>
</dbReference>
<dbReference type="InterPro" id="IPR036188">
    <property type="entry name" value="FAD/NAD-bd_sf"/>
</dbReference>
<dbReference type="InterPro" id="IPR006231">
    <property type="entry name" value="MQO"/>
</dbReference>
<dbReference type="NCBIfam" id="TIGR01320">
    <property type="entry name" value="mal_quin_oxido"/>
    <property type="match status" value="1"/>
</dbReference>
<dbReference type="NCBIfam" id="NF003603">
    <property type="entry name" value="PRK05257.1-1"/>
    <property type="match status" value="1"/>
</dbReference>
<dbReference type="NCBIfam" id="NF003605">
    <property type="entry name" value="PRK05257.1-4"/>
    <property type="match status" value="1"/>
</dbReference>
<dbReference type="NCBIfam" id="NF003606">
    <property type="entry name" value="PRK05257.2-1"/>
    <property type="match status" value="1"/>
</dbReference>
<dbReference type="NCBIfam" id="NF003610">
    <property type="entry name" value="PRK05257.3-1"/>
    <property type="match status" value="1"/>
</dbReference>
<dbReference type="NCBIfam" id="NF003611">
    <property type="entry name" value="PRK05257.3-2"/>
    <property type="match status" value="1"/>
</dbReference>
<dbReference type="NCBIfam" id="NF009875">
    <property type="entry name" value="PRK13339.1"/>
    <property type="match status" value="1"/>
</dbReference>
<dbReference type="PANTHER" id="PTHR43104">
    <property type="entry name" value="L-2-HYDROXYGLUTARATE DEHYDROGENASE, MITOCHONDRIAL"/>
    <property type="match status" value="1"/>
</dbReference>
<dbReference type="PANTHER" id="PTHR43104:SF2">
    <property type="entry name" value="L-2-HYDROXYGLUTARATE DEHYDROGENASE, MITOCHONDRIAL"/>
    <property type="match status" value="1"/>
</dbReference>
<dbReference type="Pfam" id="PF06039">
    <property type="entry name" value="Mqo"/>
    <property type="match status" value="1"/>
</dbReference>
<dbReference type="SUPFAM" id="SSF51905">
    <property type="entry name" value="FAD/NAD(P)-binding domain"/>
    <property type="match status" value="1"/>
</dbReference>
<gene>
    <name evidence="1" type="primary">mqo</name>
    <name type="ordered locus">CMM_0904</name>
</gene>
<feature type="chain" id="PRO_0000325492" description="Probable malate:quinone oxidoreductase">
    <location>
        <begin position="1"/>
        <end position="492"/>
    </location>
</feature>
<sequence>MSESAEPVDVVLVGGGIMSATLGTLIKQLEPDWTIQIFERLGEVAMESSNPWNNAGTGHAALCELNYTPEKDGKIEIGSATRINEQFQLSRQFWAHLVTAGAVPEPKEFINPTPHMTFVRGKENAEFLRRRFDAMRAHPLFEAMEYSEDPAVIHSWAPLLVLQREKDEVIAATRFEGGTDVDFGALTNKLIDYLTEHGAALHLNHEVRGLSQNPDGSWHLRIRNDVGRSTVQVDAKFVFIGAGGGALPLLQKSGIPEIKGFGGFPISGEWFRTDDPEIVARHRAKVYGKAAIGSPPMSVPHLDTRVVGGETSLLFGPYAGFSPRFLKKGSLLDLFASIRPHNIIPMLAVAKDNLSLIKYLVSQLIASKEKKFDALREFMPTADPKDWYQVTAGQRVQVMKKDAKKGGVLQFGTEVVAAADGSIAGLLGASPGASTAVPIMLDVLERCFPDRIAGWKKPLTRMIPNYGTLVASDPKKTPKIIQETAEVLELQH</sequence>
<organism>
    <name type="scientific">Clavibacter michiganensis subsp. michiganensis (strain NCPPB 382)</name>
    <dbReference type="NCBI Taxonomy" id="443906"/>
    <lineage>
        <taxon>Bacteria</taxon>
        <taxon>Bacillati</taxon>
        <taxon>Actinomycetota</taxon>
        <taxon>Actinomycetes</taxon>
        <taxon>Micrococcales</taxon>
        <taxon>Microbacteriaceae</taxon>
        <taxon>Clavibacter</taxon>
    </lineage>
</organism>
<keyword id="KW-0274">FAD</keyword>
<keyword id="KW-0285">Flavoprotein</keyword>
<keyword id="KW-0560">Oxidoreductase</keyword>
<keyword id="KW-0816">Tricarboxylic acid cycle</keyword>
<reference key="1">
    <citation type="journal article" date="2008" name="J. Bacteriol.">
        <title>The genome sequence of the tomato-pathogenic actinomycete Clavibacter michiganensis subsp. michiganensis NCPPB382 reveals a large island involved in pathogenicity.</title>
        <authorList>
            <person name="Gartemann K.-H."/>
            <person name="Abt B."/>
            <person name="Bekel T."/>
            <person name="Burger A."/>
            <person name="Engemann J."/>
            <person name="Fluegel M."/>
            <person name="Gaigalat L."/>
            <person name="Goesmann A."/>
            <person name="Graefen I."/>
            <person name="Kalinowski J."/>
            <person name="Kaup O."/>
            <person name="Kirchner O."/>
            <person name="Krause L."/>
            <person name="Linke B."/>
            <person name="McHardy A."/>
            <person name="Meyer F."/>
            <person name="Pohle S."/>
            <person name="Rueckert C."/>
            <person name="Schneiker S."/>
            <person name="Zellermann E.-M."/>
            <person name="Puehler A."/>
            <person name="Eichenlaub R."/>
            <person name="Kaiser O."/>
            <person name="Bartels D."/>
        </authorList>
    </citation>
    <scope>NUCLEOTIDE SEQUENCE [LARGE SCALE GENOMIC DNA]</scope>
    <source>
        <strain>NCPPB 382</strain>
    </source>
</reference>
<evidence type="ECO:0000255" key="1">
    <source>
        <dbReference type="HAMAP-Rule" id="MF_00212"/>
    </source>
</evidence>
<protein>
    <recommendedName>
        <fullName evidence="1">Probable malate:quinone oxidoreductase</fullName>
        <ecNumber evidence="1">1.1.5.4</ecNumber>
    </recommendedName>
    <alternativeName>
        <fullName evidence="1">MQO</fullName>
    </alternativeName>
    <alternativeName>
        <fullName evidence="1">Malate dehydrogenase [quinone]</fullName>
    </alternativeName>
</protein>
<comment type="catalytic activity">
    <reaction evidence="1">
        <text>(S)-malate + a quinone = a quinol + oxaloacetate</text>
        <dbReference type="Rhea" id="RHEA:46012"/>
        <dbReference type="ChEBI" id="CHEBI:15589"/>
        <dbReference type="ChEBI" id="CHEBI:16452"/>
        <dbReference type="ChEBI" id="CHEBI:24646"/>
        <dbReference type="ChEBI" id="CHEBI:132124"/>
        <dbReference type="EC" id="1.1.5.4"/>
    </reaction>
</comment>
<comment type="cofactor">
    <cofactor evidence="1">
        <name>FAD</name>
        <dbReference type="ChEBI" id="CHEBI:57692"/>
    </cofactor>
</comment>
<comment type="pathway">
    <text evidence="1">Carbohydrate metabolism; tricarboxylic acid cycle; oxaloacetate from (S)-malate (quinone route): step 1/1.</text>
</comment>
<comment type="similarity">
    <text evidence="1">Belongs to the MQO family.</text>
</comment>